<gene>
    <name type="primary">alr</name>
    <name type="ordered locus">VS_0285</name>
</gene>
<sequence>MKAATASIDLNALEHNLNQIKSKAPHCKVMSVVKANGYGHGLLHIAKHSKSSDAFGVARIEEALQLRAGGIVKPILLLEGFYSSGDLPILVTNNIQTVVHCEEQLSALENAELETPVVVWLKVDSGMHRLGARPEQYQNFVERLHQCANVAKPLRYMSHFGCADELDRATTVEQTELFLSLTDGCEGERSLAASAGLLAWPDSHLDWVRPGIISYGVSPFADKSAQDLGFYPVMTLTSHLIAVRDVKAGESVGYGGNWTSERDTKVGVIAIGYGDGYPRTAPNGTPVFVNGRKVPIAGRVSMDMLTVDLGPDAADKVGDEATLWGKDLPSEEVAEHIGTIAYELVTKLTSRVAMEYVK</sequence>
<accession>B7VI70</accession>
<dbReference type="EC" id="5.1.1.1" evidence="1"/>
<dbReference type="EMBL" id="FM954972">
    <property type="protein sequence ID" value="CAV17307.1"/>
    <property type="molecule type" value="Genomic_DNA"/>
</dbReference>
<dbReference type="SMR" id="B7VI70"/>
<dbReference type="STRING" id="575788.VS_0285"/>
<dbReference type="KEGG" id="vsp:VS_0285"/>
<dbReference type="PATRIC" id="fig|575788.5.peg.1664"/>
<dbReference type="eggNOG" id="COG0787">
    <property type="taxonomic scope" value="Bacteria"/>
</dbReference>
<dbReference type="HOGENOM" id="CLU_028393_1_0_6"/>
<dbReference type="UniPathway" id="UPA00042">
    <property type="reaction ID" value="UER00497"/>
</dbReference>
<dbReference type="Proteomes" id="UP000009100">
    <property type="component" value="Chromosome 1"/>
</dbReference>
<dbReference type="GO" id="GO:0005829">
    <property type="term" value="C:cytosol"/>
    <property type="evidence" value="ECO:0007669"/>
    <property type="project" value="TreeGrafter"/>
</dbReference>
<dbReference type="GO" id="GO:0008784">
    <property type="term" value="F:alanine racemase activity"/>
    <property type="evidence" value="ECO:0007669"/>
    <property type="project" value="UniProtKB-UniRule"/>
</dbReference>
<dbReference type="GO" id="GO:0030170">
    <property type="term" value="F:pyridoxal phosphate binding"/>
    <property type="evidence" value="ECO:0007669"/>
    <property type="project" value="UniProtKB-UniRule"/>
</dbReference>
<dbReference type="GO" id="GO:0030632">
    <property type="term" value="P:D-alanine biosynthetic process"/>
    <property type="evidence" value="ECO:0007669"/>
    <property type="project" value="UniProtKB-UniRule"/>
</dbReference>
<dbReference type="CDD" id="cd06827">
    <property type="entry name" value="PLPDE_III_AR_proteobact"/>
    <property type="match status" value="1"/>
</dbReference>
<dbReference type="FunFam" id="2.40.37.10:FF:000002">
    <property type="entry name" value="Alanine racemase"/>
    <property type="match status" value="1"/>
</dbReference>
<dbReference type="FunFam" id="3.20.20.10:FF:000002">
    <property type="entry name" value="Alanine racemase"/>
    <property type="match status" value="1"/>
</dbReference>
<dbReference type="Gene3D" id="3.20.20.10">
    <property type="entry name" value="Alanine racemase"/>
    <property type="match status" value="1"/>
</dbReference>
<dbReference type="Gene3D" id="2.40.37.10">
    <property type="entry name" value="Lyase, Ornithine Decarboxylase, Chain A, domain 1"/>
    <property type="match status" value="1"/>
</dbReference>
<dbReference type="HAMAP" id="MF_01201">
    <property type="entry name" value="Ala_racemase"/>
    <property type="match status" value="1"/>
</dbReference>
<dbReference type="InterPro" id="IPR000821">
    <property type="entry name" value="Ala_racemase"/>
</dbReference>
<dbReference type="InterPro" id="IPR009006">
    <property type="entry name" value="Ala_racemase/Decarboxylase_C"/>
</dbReference>
<dbReference type="InterPro" id="IPR011079">
    <property type="entry name" value="Ala_racemase_C"/>
</dbReference>
<dbReference type="InterPro" id="IPR001608">
    <property type="entry name" value="Ala_racemase_N"/>
</dbReference>
<dbReference type="InterPro" id="IPR020622">
    <property type="entry name" value="Ala_racemase_pyridoxalP-BS"/>
</dbReference>
<dbReference type="InterPro" id="IPR029066">
    <property type="entry name" value="PLP-binding_barrel"/>
</dbReference>
<dbReference type="NCBIfam" id="TIGR00492">
    <property type="entry name" value="alr"/>
    <property type="match status" value="1"/>
</dbReference>
<dbReference type="PANTHER" id="PTHR30511">
    <property type="entry name" value="ALANINE RACEMASE"/>
    <property type="match status" value="1"/>
</dbReference>
<dbReference type="PANTHER" id="PTHR30511:SF4">
    <property type="entry name" value="ALANINE RACEMASE, BIOSYNTHETIC"/>
    <property type="match status" value="1"/>
</dbReference>
<dbReference type="Pfam" id="PF00842">
    <property type="entry name" value="Ala_racemase_C"/>
    <property type="match status" value="1"/>
</dbReference>
<dbReference type="Pfam" id="PF01168">
    <property type="entry name" value="Ala_racemase_N"/>
    <property type="match status" value="1"/>
</dbReference>
<dbReference type="PRINTS" id="PR00992">
    <property type="entry name" value="ALARACEMASE"/>
</dbReference>
<dbReference type="SMART" id="SM01005">
    <property type="entry name" value="Ala_racemase_C"/>
    <property type="match status" value="1"/>
</dbReference>
<dbReference type="SUPFAM" id="SSF50621">
    <property type="entry name" value="Alanine racemase C-terminal domain-like"/>
    <property type="match status" value="1"/>
</dbReference>
<dbReference type="SUPFAM" id="SSF51419">
    <property type="entry name" value="PLP-binding barrel"/>
    <property type="match status" value="1"/>
</dbReference>
<dbReference type="PROSITE" id="PS00395">
    <property type="entry name" value="ALANINE_RACEMASE"/>
    <property type="match status" value="1"/>
</dbReference>
<proteinExistence type="inferred from homology"/>
<protein>
    <recommendedName>
        <fullName evidence="1">Alanine racemase</fullName>
        <ecNumber evidence="1">5.1.1.1</ecNumber>
    </recommendedName>
</protein>
<evidence type="ECO:0000255" key="1">
    <source>
        <dbReference type="HAMAP-Rule" id="MF_01201"/>
    </source>
</evidence>
<reference key="1">
    <citation type="submission" date="2009-02" db="EMBL/GenBank/DDBJ databases">
        <title>Vibrio splendidus str. LGP32 complete genome.</title>
        <authorList>
            <person name="Mazel D."/>
            <person name="Le Roux F."/>
        </authorList>
    </citation>
    <scope>NUCLEOTIDE SEQUENCE [LARGE SCALE GENOMIC DNA]</scope>
    <source>
        <strain>LGP32</strain>
    </source>
</reference>
<name>ALR_VIBA3</name>
<organism>
    <name type="scientific">Vibrio atlanticus (strain LGP32)</name>
    <name type="common">Vibrio splendidus (strain Mel32)</name>
    <dbReference type="NCBI Taxonomy" id="575788"/>
    <lineage>
        <taxon>Bacteria</taxon>
        <taxon>Pseudomonadati</taxon>
        <taxon>Pseudomonadota</taxon>
        <taxon>Gammaproteobacteria</taxon>
        <taxon>Vibrionales</taxon>
        <taxon>Vibrionaceae</taxon>
        <taxon>Vibrio</taxon>
    </lineage>
</organism>
<feature type="chain" id="PRO_1000164635" description="Alanine racemase">
    <location>
        <begin position="1"/>
        <end position="358"/>
    </location>
</feature>
<feature type="active site" description="Proton acceptor; specific for D-alanine" evidence="1">
    <location>
        <position position="34"/>
    </location>
</feature>
<feature type="active site" description="Proton acceptor; specific for L-alanine" evidence="1">
    <location>
        <position position="254"/>
    </location>
</feature>
<feature type="binding site" evidence="1">
    <location>
        <position position="129"/>
    </location>
    <ligand>
        <name>substrate</name>
    </ligand>
</feature>
<feature type="binding site" evidence="1">
    <location>
        <position position="302"/>
    </location>
    <ligand>
        <name>substrate</name>
    </ligand>
</feature>
<feature type="modified residue" description="N6-(pyridoxal phosphate)lysine" evidence="1">
    <location>
        <position position="34"/>
    </location>
</feature>
<comment type="function">
    <text evidence="1">Catalyzes the interconversion of L-alanine and D-alanine. May also act on other amino acids.</text>
</comment>
<comment type="catalytic activity">
    <reaction evidence="1">
        <text>L-alanine = D-alanine</text>
        <dbReference type="Rhea" id="RHEA:20249"/>
        <dbReference type="ChEBI" id="CHEBI:57416"/>
        <dbReference type="ChEBI" id="CHEBI:57972"/>
        <dbReference type="EC" id="5.1.1.1"/>
    </reaction>
</comment>
<comment type="cofactor">
    <cofactor evidence="1">
        <name>pyridoxal 5'-phosphate</name>
        <dbReference type="ChEBI" id="CHEBI:597326"/>
    </cofactor>
</comment>
<comment type="pathway">
    <text evidence="1">Amino-acid biosynthesis; D-alanine biosynthesis; D-alanine from L-alanine: step 1/1.</text>
</comment>
<comment type="similarity">
    <text evidence="1">Belongs to the alanine racemase family.</text>
</comment>
<keyword id="KW-0413">Isomerase</keyword>
<keyword id="KW-0663">Pyridoxal phosphate</keyword>